<evidence type="ECO:0000255" key="1">
    <source>
        <dbReference type="HAMAP-Rule" id="MF_00017"/>
    </source>
</evidence>
<protein>
    <recommendedName>
        <fullName evidence="1">Recombination protein RecR</fullName>
    </recommendedName>
</protein>
<feature type="chain" id="PRO_1000001570" description="Recombination protein RecR">
    <location>
        <begin position="1"/>
        <end position="201"/>
    </location>
</feature>
<feature type="domain" description="Toprim" evidence="1">
    <location>
        <begin position="82"/>
        <end position="178"/>
    </location>
</feature>
<feature type="zinc finger region" description="C4-type" evidence="1">
    <location>
        <begin position="57"/>
        <end position="74"/>
    </location>
</feature>
<reference key="1">
    <citation type="journal article" date="2006" name="Proc. Natl. Acad. Sci. U.S.A.">
        <title>Comparative genomics of the lactic acid bacteria.</title>
        <authorList>
            <person name="Makarova K.S."/>
            <person name="Slesarev A."/>
            <person name="Wolf Y.I."/>
            <person name="Sorokin A."/>
            <person name="Mirkin B."/>
            <person name="Koonin E.V."/>
            <person name="Pavlov A."/>
            <person name="Pavlova N."/>
            <person name="Karamychev V."/>
            <person name="Polouchine N."/>
            <person name="Shakhova V."/>
            <person name="Grigoriev I."/>
            <person name="Lou Y."/>
            <person name="Rohksar D."/>
            <person name="Lucas S."/>
            <person name="Huang K."/>
            <person name="Goodstein D.M."/>
            <person name="Hawkins T."/>
            <person name="Plengvidhya V."/>
            <person name="Welker D."/>
            <person name="Hughes J."/>
            <person name="Goh Y."/>
            <person name="Benson A."/>
            <person name="Baldwin K."/>
            <person name="Lee J.-H."/>
            <person name="Diaz-Muniz I."/>
            <person name="Dosti B."/>
            <person name="Smeianov V."/>
            <person name="Wechter W."/>
            <person name="Barabote R."/>
            <person name="Lorca G."/>
            <person name="Altermann E."/>
            <person name="Barrangou R."/>
            <person name="Ganesan B."/>
            <person name="Xie Y."/>
            <person name="Rawsthorne H."/>
            <person name="Tamir D."/>
            <person name="Parker C."/>
            <person name="Breidt F."/>
            <person name="Broadbent J.R."/>
            <person name="Hutkins R."/>
            <person name="O'Sullivan D."/>
            <person name="Steele J."/>
            <person name="Unlu G."/>
            <person name="Saier M.H. Jr."/>
            <person name="Klaenhammer T."/>
            <person name="Richardson P."/>
            <person name="Kozyavkin S."/>
            <person name="Weimer B.C."/>
            <person name="Mills D.A."/>
        </authorList>
    </citation>
    <scope>NUCLEOTIDE SEQUENCE [LARGE SCALE GENOMIC DNA]</scope>
    <source>
        <strain>ATCC BAA-331 / PSU-1</strain>
    </source>
</reference>
<gene>
    <name evidence="1" type="primary">recR</name>
    <name type="ordered locus">OEOE_1409</name>
</gene>
<proteinExistence type="inferred from homology"/>
<comment type="function">
    <text evidence="1">May play a role in DNA repair. It seems to be involved in an RecBC-independent recombinational process of DNA repair. It may act with RecF and RecO.</text>
</comment>
<comment type="similarity">
    <text evidence="1">Belongs to the RecR family.</text>
</comment>
<keyword id="KW-0227">DNA damage</keyword>
<keyword id="KW-0233">DNA recombination</keyword>
<keyword id="KW-0234">DNA repair</keyword>
<keyword id="KW-0479">Metal-binding</keyword>
<keyword id="KW-1185">Reference proteome</keyword>
<keyword id="KW-0862">Zinc</keyword>
<keyword id="KW-0863">Zinc-finger</keyword>
<organism>
    <name type="scientific">Oenococcus oeni (strain ATCC BAA-331 / PSU-1)</name>
    <dbReference type="NCBI Taxonomy" id="203123"/>
    <lineage>
        <taxon>Bacteria</taxon>
        <taxon>Bacillati</taxon>
        <taxon>Bacillota</taxon>
        <taxon>Bacilli</taxon>
        <taxon>Lactobacillales</taxon>
        <taxon>Lactobacillaceae</taxon>
        <taxon>Oenococcus</taxon>
    </lineage>
</organism>
<accession>Q04E51</accession>
<sequence>MQYPEAIAKLIESYSKLPGIGRKSATRLAFYTLGMSDDDVKNFARSLSASKSDLTFCRICGFITSKDDDPCVICSDESRDQSKIFVVENSQDEMAIENTHDYHGLYHVLNGVLSPMEGRGPEDINITSLITRLSDHSEVKEVIIGLDASTEGEATTLYLARLIRPSGIKVTRLARGLSVGTNVDYADQLTLTQAVNGRTEI</sequence>
<name>RECR_OENOB</name>
<dbReference type="EMBL" id="CP000411">
    <property type="protein sequence ID" value="ABJ57271.1"/>
    <property type="molecule type" value="Genomic_DNA"/>
</dbReference>
<dbReference type="RefSeq" id="WP_002820791.1">
    <property type="nucleotide sequence ID" value="NC_008528.1"/>
</dbReference>
<dbReference type="SMR" id="Q04E51"/>
<dbReference type="STRING" id="203123.OEOE_1409"/>
<dbReference type="GeneID" id="75066307"/>
<dbReference type="KEGG" id="ooe:OEOE_1409"/>
<dbReference type="eggNOG" id="COG0353">
    <property type="taxonomic scope" value="Bacteria"/>
</dbReference>
<dbReference type="HOGENOM" id="CLU_060739_1_0_9"/>
<dbReference type="Proteomes" id="UP000000774">
    <property type="component" value="Chromosome"/>
</dbReference>
<dbReference type="GO" id="GO:0003677">
    <property type="term" value="F:DNA binding"/>
    <property type="evidence" value="ECO:0007669"/>
    <property type="project" value="UniProtKB-UniRule"/>
</dbReference>
<dbReference type="GO" id="GO:0008270">
    <property type="term" value="F:zinc ion binding"/>
    <property type="evidence" value="ECO:0007669"/>
    <property type="project" value="UniProtKB-KW"/>
</dbReference>
<dbReference type="GO" id="GO:0006310">
    <property type="term" value="P:DNA recombination"/>
    <property type="evidence" value="ECO:0007669"/>
    <property type="project" value="UniProtKB-UniRule"/>
</dbReference>
<dbReference type="GO" id="GO:0006281">
    <property type="term" value="P:DNA repair"/>
    <property type="evidence" value="ECO:0007669"/>
    <property type="project" value="UniProtKB-UniRule"/>
</dbReference>
<dbReference type="CDD" id="cd01025">
    <property type="entry name" value="TOPRIM_recR"/>
    <property type="match status" value="1"/>
</dbReference>
<dbReference type="Gene3D" id="3.40.1360.10">
    <property type="match status" value="1"/>
</dbReference>
<dbReference type="Gene3D" id="6.10.250.240">
    <property type="match status" value="1"/>
</dbReference>
<dbReference type="Gene3D" id="1.10.8.420">
    <property type="entry name" value="RecR Domain 1"/>
    <property type="match status" value="1"/>
</dbReference>
<dbReference type="HAMAP" id="MF_00017">
    <property type="entry name" value="RecR"/>
    <property type="match status" value="1"/>
</dbReference>
<dbReference type="InterPro" id="IPR000093">
    <property type="entry name" value="DNA_Rcmb_RecR"/>
</dbReference>
<dbReference type="InterPro" id="IPR023627">
    <property type="entry name" value="Rcmb_RecR"/>
</dbReference>
<dbReference type="InterPro" id="IPR006171">
    <property type="entry name" value="TOPRIM_dom"/>
</dbReference>
<dbReference type="InterPro" id="IPR034137">
    <property type="entry name" value="TOPRIM_RecR"/>
</dbReference>
<dbReference type="NCBIfam" id="TIGR00615">
    <property type="entry name" value="recR"/>
    <property type="match status" value="1"/>
</dbReference>
<dbReference type="PANTHER" id="PTHR30446">
    <property type="entry name" value="RECOMBINATION PROTEIN RECR"/>
    <property type="match status" value="1"/>
</dbReference>
<dbReference type="PANTHER" id="PTHR30446:SF0">
    <property type="entry name" value="RECOMBINATION PROTEIN RECR"/>
    <property type="match status" value="1"/>
</dbReference>
<dbReference type="Pfam" id="PF21175">
    <property type="entry name" value="RecR_C"/>
    <property type="match status" value="1"/>
</dbReference>
<dbReference type="Pfam" id="PF21176">
    <property type="entry name" value="RecR_HhH"/>
    <property type="match status" value="1"/>
</dbReference>
<dbReference type="Pfam" id="PF13662">
    <property type="entry name" value="Toprim_4"/>
    <property type="match status" value="1"/>
</dbReference>
<dbReference type="SMART" id="SM00493">
    <property type="entry name" value="TOPRIM"/>
    <property type="match status" value="1"/>
</dbReference>
<dbReference type="SUPFAM" id="SSF111304">
    <property type="entry name" value="Recombination protein RecR"/>
    <property type="match status" value="1"/>
</dbReference>
<dbReference type="PROSITE" id="PS50880">
    <property type="entry name" value="TOPRIM"/>
    <property type="match status" value="1"/>
</dbReference>